<keyword id="KW-0028">Amino-acid biosynthesis</keyword>
<keyword id="KW-0100">Branched-chain amino acid biosynthesis</keyword>
<keyword id="KW-0432">Leucine biosynthesis</keyword>
<keyword id="KW-0456">Lyase</keyword>
<keyword id="KW-1185">Reference proteome</keyword>
<organism>
    <name type="scientific">Shigella boydii serotype 18 (strain CDC 3083-94 / BS512)</name>
    <dbReference type="NCBI Taxonomy" id="344609"/>
    <lineage>
        <taxon>Bacteria</taxon>
        <taxon>Pseudomonadati</taxon>
        <taxon>Pseudomonadota</taxon>
        <taxon>Gammaproteobacteria</taxon>
        <taxon>Enterobacterales</taxon>
        <taxon>Enterobacteriaceae</taxon>
        <taxon>Shigella</taxon>
    </lineage>
</organism>
<sequence length="201" mass="22487">MAEKFIKHTGLVVPLDAANVDTDAIIPKQFLQKVTRTGFGAHLFNDWRFLDEKGQQPNPDFVLNFPQYQGASILLARENFGCGSSREHAPWALTDYGFKVVIAPSFADIFYGNSFNNQLLPVKLSDAEVDELFALVKANPGIHFDVDLEAQEVKAGEKTYRFTIDAFRRHCMMNGLDSIGLTLQHDDAIAAYEAKQPAFMN</sequence>
<evidence type="ECO:0000255" key="1">
    <source>
        <dbReference type="HAMAP-Rule" id="MF_01031"/>
    </source>
</evidence>
<reference key="1">
    <citation type="submission" date="2008-05" db="EMBL/GenBank/DDBJ databases">
        <title>Complete sequence of Shigella boydii serotype 18 strain BS512.</title>
        <authorList>
            <person name="Rasko D.A."/>
            <person name="Rosovitz M."/>
            <person name="Maurelli A.T."/>
            <person name="Myers G."/>
            <person name="Seshadri R."/>
            <person name="Cer R."/>
            <person name="Jiang L."/>
            <person name="Ravel J."/>
            <person name="Sebastian Y."/>
        </authorList>
    </citation>
    <scope>NUCLEOTIDE SEQUENCE [LARGE SCALE GENOMIC DNA]</scope>
    <source>
        <strain>CDC 3083-94 / BS512</strain>
    </source>
</reference>
<gene>
    <name evidence="1" type="primary">leuD</name>
    <name type="ordered locus">SbBS512_E0065</name>
</gene>
<feature type="chain" id="PRO_1000135835" description="3-isopropylmalate dehydratase small subunit">
    <location>
        <begin position="1"/>
        <end position="201"/>
    </location>
</feature>
<name>LEUD_SHIB3</name>
<dbReference type="EC" id="4.2.1.33" evidence="1"/>
<dbReference type="EMBL" id="CP001063">
    <property type="protein sequence ID" value="ACD07522.1"/>
    <property type="molecule type" value="Genomic_DNA"/>
</dbReference>
<dbReference type="RefSeq" id="WP_000818228.1">
    <property type="nucleotide sequence ID" value="NC_010658.1"/>
</dbReference>
<dbReference type="SMR" id="B2U278"/>
<dbReference type="STRING" id="344609.SbBS512_E0065"/>
<dbReference type="GeneID" id="93777364"/>
<dbReference type="KEGG" id="sbc:SbBS512_E0065"/>
<dbReference type="HOGENOM" id="CLU_081378_0_3_6"/>
<dbReference type="UniPathway" id="UPA00048">
    <property type="reaction ID" value="UER00071"/>
</dbReference>
<dbReference type="Proteomes" id="UP000001030">
    <property type="component" value="Chromosome"/>
</dbReference>
<dbReference type="GO" id="GO:0009316">
    <property type="term" value="C:3-isopropylmalate dehydratase complex"/>
    <property type="evidence" value="ECO:0007669"/>
    <property type="project" value="InterPro"/>
</dbReference>
<dbReference type="GO" id="GO:0003861">
    <property type="term" value="F:3-isopropylmalate dehydratase activity"/>
    <property type="evidence" value="ECO:0007669"/>
    <property type="project" value="UniProtKB-UniRule"/>
</dbReference>
<dbReference type="GO" id="GO:0009098">
    <property type="term" value="P:L-leucine biosynthetic process"/>
    <property type="evidence" value="ECO:0007669"/>
    <property type="project" value="UniProtKB-UniRule"/>
</dbReference>
<dbReference type="CDD" id="cd01577">
    <property type="entry name" value="IPMI_Swivel"/>
    <property type="match status" value="1"/>
</dbReference>
<dbReference type="FunFam" id="3.20.19.10:FF:000003">
    <property type="entry name" value="3-isopropylmalate dehydratase small subunit"/>
    <property type="match status" value="1"/>
</dbReference>
<dbReference type="Gene3D" id="3.20.19.10">
    <property type="entry name" value="Aconitase, domain 4"/>
    <property type="match status" value="1"/>
</dbReference>
<dbReference type="HAMAP" id="MF_01031">
    <property type="entry name" value="LeuD_type1"/>
    <property type="match status" value="1"/>
</dbReference>
<dbReference type="InterPro" id="IPR004431">
    <property type="entry name" value="3-IsopropMal_deHydase_ssu"/>
</dbReference>
<dbReference type="InterPro" id="IPR015928">
    <property type="entry name" value="Aconitase/3IPM_dehydase_swvl"/>
</dbReference>
<dbReference type="InterPro" id="IPR000573">
    <property type="entry name" value="AconitaseA/IPMdHydase_ssu_swvl"/>
</dbReference>
<dbReference type="InterPro" id="IPR033940">
    <property type="entry name" value="IPMI_Swivel"/>
</dbReference>
<dbReference type="InterPro" id="IPR050075">
    <property type="entry name" value="LeuD"/>
</dbReference>
<dbReference type="NCBIfam" id="TIGR00171">
    <property type="entry name" value="leuD"/>
    <property type="match status" value="1"/>
</dbReference>
<dbReference type="NCBIfam" id="NF002458">
    <property type="entry name" value="PRK01641.1"/>
    <property type="match status" value="1"/>
</dbReference>
<dbReference type="PANTHER" id="PTHR43345:SF5">
    <property type="entry name" value="3-ISOPROPYLMALATE DEHYDRATASE SMALL SUBUNIT"/>
    <property type="match status" value="1"/>
</dbReference>
<dbReference type="PANTHER" id="PTHR43345">
    <property type="entry name" value="3-ISOPROPYLMALATE DEHYDRATASE SMALL SUBUNIT 2-RELATED-RELATED"/>
    <property type="match status" value="1"/>
</dbReference>
<dbReference type="Pfam" id="PF00694">
    <property type="entry name" value="Aconitase_C"/>
    <property type="match status" value="1"/>
</dbReference>
<dbReference type="SUPFAM" id="SSF52016">
    <property type="entry name" value="LeuD/IlvD-like"/>
    <property type="match status" value="1"/>
</dbReference>
<protein>
    <recommendedName>
        <fullName evidence="1">3-isopropylmalate dehydratase small subunit</fullName>
        <ecNumber evidence="1">4.2.1.33</ecNumber>
    </recommendedName>
    <alternativeName>
        <fullName evidence="1">Alpha-IPM isomerase</fullName>
        <shortName evidence="1">IPMI</shortName>
    </alternativeName>
    <alternativeName>
        <fullName evidence="1">Isopropylmalate isomerase</fullName>
    </alternativeName>
</protein>
<comment type="function">
    <text evidence="1">Catalyzes the isomerization between 2-isopropylmalate and 3-isopropylmalate, via the formation of 2-isopropylmaleate.</text>
</comment>
<comment type="catalytic activity">
    <reaction evidence="1">
        <text>(2R,3S)-3-isopropylmalate = (2S)-2-isopropylmalate</text>
        <dbReference type="Rhea" id="RHEA:32287"/>
        <dbReference type="ChEBI" id="CHEBI:1178"/>
        <dbReference type="ChEBI" id="CHEBI:35121"/>
        <dbReference type="EC" id="4.2.1.33"/>
    </reaction>
</comment>
<comment type="pathway">
    <text evidence="1">Amino-acid biosynthesis; L-leucine biosynthesis; L-leucine from 3-methyl-2-oxobutanoate: step 2/4.</text>
</comment>
<comment type="subunit">
    <text evidence="1">Heterodimer of LeuC and LeuD.</text>
</comment>
<comment type="similarity">
    <text evidence="1">Belongs to the LeuD family. LeuD type 1 subfamily.</text>
</comment>
<proteinExistence type="inferred from homology"/>
<accession>B2U278</accession>